<accession>P9WFK8</accession>
<accession>L0T5R4</accession>
<accession>O53763</accession>
<accession>P67380</accession>
<organism>
    <name type="scientific">Mycobacterium tuberculosis (strain CDC 1551 / Oshkosh)</name>
    <dbReference type="NCBI Taxonomy" id="83331"/>
    <lineage>
        <taxon>Bacteria</taxon>
        <taxon>Bacillati</taxon>
        <taxon>Actinomycetota</taxon>
        <taxon>Actinomycetes</taxon>
        <taxon>Mycobacteriales</taxon>
        <taxon>Mycobacteriaceae</taxon>
        <taxon>Mycobacterium</taxon>
        <taxon>Mycobacterium tuberculosis complex</taxon>
    </lineage>
</organism>
<proteinExistence type="inferred from homology"/>
<protein>
    <recommendedName>
        <fullName evidence="1">Nucleotide-binding protein MT0592</fullName>
    </recommendedName>
</protein>
<gene>
    <name type="ordered locus">MT0592</name>
</gene>
<reference key="1">
    <citation type="journal article" date="2002" name="J. Bacteriol.">
        <title>Whole-genome comparison of Mycobacterium tuberculosis clinical and laboratory strains.</title>
        <authorList>
            <person name="Fleischmann R.D."/>
            <person name="Alland D."/>
            <person name="Eisen J.A."/>
            <person name="Carpenter L."/>
            <person name="White O."/>
            <person name="Peterson J.D."/>
            <person name="DeBoy R.T."/>
            <person name="Dodson R.J."/>
            <person name="Gwinn M.L."/>
            <person name="Haft D.H."/>
            <person name="Hickey E.K."/>
            <person name="Kolonay J.F."/>
            <person name="Nelson W.C."/>
            <person name="Umayam L.A."/>
            <person name="Ermolaeva M.D."/>
            <person name="Salzberg S.L."/>
            <person name="Delcher A."/>
            <person name="Utterback T.R."/>
            <person name="Weidman J.F."/>
            <person name="Khouri H.M."/>
            <person name="Gill J."/>
            <person name="Mikula A."/>
            <person name="Bishai W."/>
            <person name="Jacobs W.R. Jr."/>
            <person name="Venter J.C."/>
            <person name="Fraser C.M."/>
        </authorList>
    </citation>
    <scope>NUCLEOTIDE SEQUENCE [LARGE SCALE GENOMIC DNA]</scope>
    <source>
        <strain>CDC 1551 / Oshkosh</strain>
    </source>
</reference>
<feature type="chain" id="PRO_0000428521" description="Nucleotide-binding protein MT0592">
    <location>
        <begin position="1"/>
        <end position="163"/>
    </location>
</feature>
<sequence>MADSSFDIVSKVDRQEVDNALNQAAKELATRFDFRGTDTKIAWKGDEAVELTSSTEERVKAAVDVFKEKLIRRDISLKAFEAGEPQASGKTYKVTGALKQGISSENAKKITKLIRDAGPKNVKTQIQGDEVRVTSKKRDDLQAVIAMLKKADLDVALQFVNYR</sequence>
<comment type="function">
    <text evidence="1">Nucleotide-binding protein.</text>
</comment>
<comment type="similarity">
    <text evidence="1">Belongs to the YajQ family.</text>
</comment>
<evidence type="ECO:0000255" key="1">
    <source>
        <dbReference type="HAMAP-Rule" id="MF_00632"/>
    </source>
</evidence>
<name>Y566_MYCTO</name>
<keyword id="KW-0547">Nucleotide-binding</keyword>
<keyword id="KW-1185">Reference proteome</keyword>
<dbReference type="EMBL" id="AE000516">
    <property type="protein sequence ID" value="AAK44815.1"/>
    <property type="molecule type" value="Genomic_DNA"/>
</dbReference>
<dbReference type="PIR" id="E70932">
    <property type="entry name" value="E70932"/>
</dbReference>
<dbReference type="RefSeq" id="WP_003402987.1">
    <property type="nucleotide sequence ID" value="NZ_KK341227.1"/>
</dbReference>
<dbReference type="SMR" id="P9WFK8"/>
<dbReference type="KEGG" id="mtc:MT0592"/>
<dbReference type="PATRIC" id="fig|83331.31.peg.623"/>
<dbReference type="HOGENOM" id="CLU_099839_0_0_11"/>
<dbReference type="Proteomes" id="UP000001020">
    <property type="component" value="Chromosome"/>
</dbReference>
<dbReference type="GO" id="GO:0005829">
    <property type="term" value="C:cytosol"/>
    <property type="evidence" value="ECO:0007669"/>
    <property type="project" value="TreeGrafter"/>
</dbReference>
<dbReference type="GO" id="GO:0000166">
    <property type="term" value="F:nucleotide binding"/>
    <property type="evidence" value="ECO:0007669"/>
    <property type="project" value="TreeGrafter"/>
</dbReference>
<dbReference type="CDD" id="cd11740">
    <property type="entry name" value="YajQ_like"/>
    <property type="match status" value="1"/>
</dbReference>
<dbReference type="FunFam" id="3.30.70.860:FF:000004">
    <property type="entry name" value="UPF0234 protein AWC22_11905"/>
    <property type="match status" value="1"/>
</dbReference>
<dbReference type="FunFam" id="3.30.70.990:FF:000003">
    <property type="entry name" value="UPF0234 protein MIP_06774"/>
    <property type="match status" value="1"/>
</dbReference>
<dbReference type="Gene3D" id="3.30.70.860">
    <property type="match status" value="1"/>
</dbReference>
<dbReference type="Gene3D" id="3.30.70.990">
    <property type="entry name" value="YajQ-like, domain 2"/>
    <property type="match status" value="1"/>
</dbReference>
<dbReference type="HAMAP" id="MF_00632">
    <property type="entry name" value="YajQ"/>
    <property type="match status" value="1"/>
</dbReference>
<dbReference type="InterPro" id="IPR007551">
    <property type="entry name" value="DUF520"/>
</dbReference>
<dbReference type="InterPro" id="IPR035571">
    <property type="entry name" value="UPF0234-like_C"/>
</dbReference>
<dbReference type="InterPro" id="IPR035570">
    <property type="entry name" value="UPF0234_N"/>
</dbReference>
<dbReference type="InterPro" id="IPR036183">
    <property type="entry name" value="YajQ-like_sf"/>
</dbReference>
<dbReference type="NCBIfam" id="NF003819">
    <property type="entry name" value="PRK05412.1"/>
    <property type="match status" value="1"/>
</dbReference>
<dbReference type="PANTHER" id="PTHR30476">
    <property type="entry name" value="UPF0234 PROTEIN YAJQ"/>
    <property type="match status" value="1"/>
</dbReference>
<dbReference type="PANTHER" id="PTHR30476:SF0">
    <property type="entry name" value="UPF0234 PROTEIN YAJQ"/>
    <property type="match status" value="1"/>
</dbReference>
<dbReference type="Pfam" id="PF04461">
    <property type="entry name" value="DUF520"/>
    <property type="match status" value="1"/>
</dbReference>
<dbReference type="SUPFAM" id="SSF89963">
    <property type="entry name" value="YajQ-like"/>
    <property type="match status" value="2"/>
</dbReference>